<feature type="chain" id="PRO_0000230198" description="Phosphoribosyl-ATP pyrophosphatase">
    <location>
        <begin position="1"/>
        <end position="101"/>
    </location>
</feature>
<keyword id="KW-0028">Amino-acid biosynthesis</keyword>
<keyword id="KW-0067">ATP-binding</keyword>
<keyword id="KW-0963">Cytoplasm</keyword>
<keyword id="KW-0368">Histidine biosynthesis</keyword>
<keyword id="KW-0378">Hydrolase</keyword>
<keyword id="KW-0547">Nucleotide-binding</keyword>
<keyword id="KW-1185">Reference proteome</keyword>
<dbReference type="EC" id="3.6.1.31" evidence="1"/>
<dbReference type="EMBL" id="CR936257">
    <property type="protein sequence ID" value="CAI48326.1"/>
    <property type="molecule type" value="Genomic_DNA"/>
</dbReference>
<dbReference type="RefSeq" id="WP_011321962.1">
    <property type="nucleotide sequence ID" value="NC_007426.1"/>
</dbReference>
<dbReference type="SMR" id="Q3IU57"/>
<dbReference type="STRING" id="348780.NP_0470A"/>
<dbReference type="EnsemblBacteria" id="CAI48326">
    <property type="protein sequence ID" value="CAI48326"/>
    <property type="gene ID" value="NP_0470A"/>
</dbReference>
<dbReference type="GeneID" id="3702818"/>
<dbReference type="KEGG" id="nph:NP_0470A"/>
<dbReference type="eggNOG" id="arCOG02677">
    <property type="taxonomic scope" value="Archaea"/>
</dbReference>
<dbReference type="HOGENOM" id="CLU_123337_0_0_2"/>
<dbReference type="OrthoDB" id="39686at2157"/>
<dbReference type="UniPathway" id="UPA00031">
    <property type="reaction ID" value="UER00007"/>
</dbReference>
<dbReference type="Proteomes" id="UP000002698">
    <property type="component" value="Chromosome"/>
</dbReference>
<dbReference type="GO" id="GO:0005737">
    <property type="term" value="C:cytoplasm"/>
    <property type="evidence" value="ECO:0007669"/>
    <property type="project" value="UniProtKB-SubCell"/>
</dbReference>
<dbReference type="GO" id="GO:0005524">
    <property type="term" value="F:ATP binding"/>
    <property type="evidence" value="ECO:0007669"/>
    <property type="project" value="UniProtKB-KW"/>
</dbReference>
<dbReference type="GO" id="GO:0004636">
    <property type="term" value="F:phosphoribosyl-ATP diphosphatase activity"/>
    <property type="evidence" value="ECO:0007669"/>
    <property type="project" value="UniProtKB-UniRule"/>
</dbReference>
<dbReference type="GO" id="GO:0000105">
    <property type="term" value="P:L-histidine biosynthetic process"/>
    <property type="evidence" value="ECO:0007669"/>
    <property type="project" value="UniProtKB-UniRule"/>
</dbReference>
<dbReference type="CDD" id="cd11534">
    <property type="entry name" value="NTP-PPase_HisIE_like"/>
    <property type="match status" value="1"/>
</dbReference>
<dbReference type="FunFam" id="1.10.287.1080:FF:000002">
    <property type="entry name" value="Histidine biosynthesis bifunctional protein HisIE"/>
    <property type="match status" value="1"/>
</dbReference>
<dbReference type="Gene3D" id="1.10.287.1080">
    <property type="entry name" value="MazG-like"/>
    <property type="match status" value="1"/>
</dbReference>
<dbReference type="HAMAP" id="MF_01020">
    <property type="entry name" value="HisE"/>
    <property type="match status" value="1"/>
</dbReference>
<dbReference type="InterPro" id="IPR008179">
    <property type="entry name" value="HisE"/>
</dbReference>
<dbReference type="InterPro" id="IPR021130">
    <property type="entry name" value="PRib-ATP_PPHydrolase-like"/>
</dbReference>
<dbReference type="NCBIfam" id="TIGR03188">
    <property type="entry name" value="histidine_hisI"/>
    <property type="match status" value="1"/>
</dbReference>
<dbReference type="PANTHER" id="PTHR42945">
    <property type="entry name" value="HISTIDINE BIOSYNTHESIS BIFUNCTIONAL PROTEIN"/>
    <property type="match status" value="1"/>
</dbReference>
<dbReference type="PANTHER" id="PTHR42945:SF9">
    <property type="entry name" value="HISTIDINE BIOSYNTHESIS BIFUNCTIONAL PROTEIN HISIE"/>
    <property type="match status" value="1"/>
</dbReference>
<dbReference type="Pfam" id="PF01503">
    <property type="entry name" value="PRA-PH"/>
    <property type="match status" value="1"/>
</dbReference>
<dbReference type="SUPFAM" id="SSF101386">
    <property type="entry name" value="all-alpha NTP pyrophosphatases"/>
    <property type="match status" value="1"/>
</dbReference>
<protein>
    <recommendedName>
        <fullName evidence="1">Phosphoribosyl-ATP pyrophosphatase</fullName>
        <shortName evidence="1">PRA-PH</shortName>
        <ecNumber evidence="1">3.6.1.31</ecNumber>
    </recommendedName>
</protein>
<proteinExistence type="inferred from homology"/>
<comment type="catalytic activity">
    <reaction evidence="1">
        <text>1-(5-phospho-beta-D-ribosyl)-ATP + H2O = 1-(5-phospho-beta-D-ribosyl)-5'-AMP + diphosphate + H(+)</text>
        <dbReference type="Rhea" id="RHEA:22828"/>
        <dbReference type="ChEBI" id="CHEBI:15377"/>
        <dbReference type="ChEBI" id="CHEBI:15378"/>
        <dbReference type="ChEBI" id="CHEBI:33019"/>
        <dbReference type="ChEBI" id="CHEBI:59457"/>
        <dbReference type="ChEBI" id="CHEBI:73183"/>
        <dbReference type="EC" id="3.6.1.31"/>
    </reaction>
</comment>
<comment type="pathway">
    <text evidence="1">Amino-acid biosynthesis; L-histidine biosynthesis; L-histidine from 5-phospho-alpha-D-ribose 1-diphosphate: step 2/9.</text>
</comment>
<comment type="subcellular location">
    <subcellularLocation>
        <location evidence="1">Cytoplasm</location>
    </subcellularLocation>
</comment>
<comment type="similarity">
    <text evidence="1">Belongs to the PRA-PH family.</text>
</comment>
<sequence length="101" mass="11386">MSGDGHDGDEVLDELFEVIESRKEELPDGSYTASLFTHEKGENAVLEKLGEETTELLLAAKDDDDEELAHEAADIVYHLLVLLSMKDMELADLRAELRKRR</sequence>
<name>HIS2_NATPD</name>
<reference key="1">
    <citation type="journal article" date="2005" name="Genome Res.">
        <title>Living with two extremes: conclusions from the genome sequence of Natronomonas pharaonis.</title>
        <authorList>
            <person name="Falb M."/>
            <person name="Pfeiffer F."/>
            <person name="Palm P."/>
            <person name="Rodewald K."/>
            <person name="Hickmann V."/>
            <person name="Tittor J."/>
            <person name="Oesterhelt D."/>
        </authorList>
    </citation>
    <scope>NUCLEOTIDE SEQUENCE [LARGE SCALE GENOMIC DNA]</scope>
    <source>
        <strain>ATCC 35678 / DSM 2160 / CIP 103997 / JCM 8858 / NBRC 14720 / NCIMB 2260 / Gabara</strain>
    </source>
</reference>
<gene>
    <name evidence="1" type="primary">hisE</name>
    <name type="ordered locus">NP_0470A</name>
</gene>
<evidence type="ECO:0000255" key="1">
    <source>
        <dbReference type="HAMAP-Rule" id="MF_01020"/>
    </source>
</evidence>
<accession>Q3IU57</accession>
<organism>
    <name type="scientific">Natronomonas pharaonis (strain ATCC 35678 / DSM 2160 / CIP 103997 / JCM 8858 / NBRC 14720 / NCIMB 2260 / Gabara)</name>
    <name type="common">Halobacterium pharaonis</name>
    <dbReference type="NCBI Taxonomy" id="348780"/>
    <lineage>
        <taxon>Archaea</taxon>
        <taxon>Methanobacteriati</taxon>
        <taxon>Methanobacteriota</taxon>
        <taxon>Stenosarchaea group</taxon>
        <taxon>Halobacteria</taxon>
        <taxon>Halobacteriales</taxon>
        <taxon>Haloarculaceae</taxon>
        <taxon>Natronomonas</taxon>
    </lineage>
</organism>